<accession>Q32DH8</accession>
<dbReference type="EC" id="4.3.1.18" evidence="1"/>
<dbReference type="EMBL" id="CP000034">
    <property type="protein sequence ID" value="ABB62627.1"/>
    <property type="molecule type" value="Genomic_DNA"/>
</dbReference>
<dbReference type="RefSeq" id="WP_000427356.1">
    <property type="nucleotide sequence ID" value="NC_007606.1"/>
</dbReference>
<dbReference type="RefSeq" id="YP_404118.1">
    <property type="nucleotide sequence ID" value="NC_007606.1"/>
</dbReference>
<dbReference type="SMR" id="Q32DH8"/>
<dbReference type="STRING" id="300267.SDY_2561"/>
<dbReference type="EnsemblBacteria" id="ABB62627">
    <property type="protein sequence ID" value="ABB62627"/>
    <property type="gene ID" value="SDY_2561"/>
</dbReference>
<dbReference type="KEGG" id="sdy:SDY_2561"/>
<dbReference type="PATRIC" id="fig|300267.13.peg.3085"/>
<dbReference type="HOGENOM" id="CLU_035707_0_0_6"/>
<dbReference type="Proteomes" id="UP000002716">
    <property type="component" value="Chromosome"/>
</dbReference>
<dbReference type="GO" id="GO:0008721">
    <property type="term" value="F:D-serine ammonia-lyase activity"/>
    <property type="evidence" value="ECO:0007669"/>
    <property type="project" value="UniProtKB-EC"/>
</dbReference>
<dbReference type="GO" id="GO:0016836">
    <property type="term" value="F:hydro-lyase activity"/>
    <property type="evidence" value="ECO:0007669"/>
    <property type="project" value="UniProtKB-UniRule"/>
</dbReference>
<dbReference type="GO" id="GO:0030170">
    <property type="term" value="F:pyridoxal phosphate binding"/>
    <property type="evidence" value="ECO:0007669"/>
    <property type="project" value="InterPro"/>
</dbReference>
<dbReference type="GO" id="GO:0036088">
    <property type="term" value="P:D-serine catabolic process"/>
    <property type="evidence" value="ECO:0007669"/>
    <property type="project" value="TreeGrafter"/>
</dbReference>
<dbReference type="GO" id="GO:0009097">
    <property type="term" value="P:isoleucine biosynthetic process"/>
    <property type="evidence" value="ECO:0007669"/>
    <property type="project" value="TreeGrafter"/>
</dbReference>
<dbReference type="CDD" id="cd06447">
    <property type="entry name" value="D-Ser-dehyd"/>
    <property type="match status" value="1"/>
</dbReference>
<dbReference type="FunFam" id="3.40.50.1100:FF:000018">
    <property type="entry name" value="D-serine dehydratase"/>
    <property type="match status" value="1"/>
</dbReference>
<dbReference type="Gene3D" id="3.40.50.1100">
    <property type="match status" value="2"/>
</dbReference>
<dbReference type="HAMAP" id="MF_01030">
    <property type="entry name" value="D_Ser_dehydrat"/>
    <property type="match status" value="1"/>
</dbReference>
<dbReference type="InterPro" id="IPR011780">
    <property type="entry name" value="D_Ser_am_lyase"/>
</dbReference>
<dbReference type="InterPro" id="IPR050147">
    <property type="entry name" value="Ser/Thr_Dehydratase"/>
</dbReference>
<dbReference type="InterPro" id="IPR000634">
    <property type="entry name" value="Ser/Thr_deHydtase_PyrdxlP-BS"/>
</dbReference>
<dbReference type="InterPro" id="IPR001926">
    <property type="entry name" value="TrpB-like_PALP"/>
</dbReference>
<dbReference type="InterPro" id="IPR036052">
    <property type="entry name" value="TrpB-like_PALP_sf"/>
</dbReference>
<dbReference type="NCBIfam" id="TIGR02035">
    <property type="entry name" value="D_Ser_am_lyase"/>
    <property type="match status" value="1"/>
</dbReference>
<dbReference type="NCBIfam" id="NF002823">
    <property type="entry name" value="PRK02991.1"/>
    <property type="match status" value="1"/>
</dbReference>
<dbReference type="PANTHER" id="PTHR48078:SF9">
    <property type="entry name" value="D-SERINE DEHYDRATASE"/>
    <property type="match status" value="1"/>
</dbReference>
<dbReference type="PANTHER" id="PTHR48078">
    <property type="entry name" value="THREONINE DEHYDRATASE, MITOCHONDRIAL-RELATED"/>
    <property type="match status" value="1"/>
</dbReference>
<dbReference type="Pfam" id="PF00291">
    <property type="entry name" value="PALP"/>
    <property type="match status" value="1"/>
</dbReference>
<dbReference type="SUPFAM" id="SSF53686">
    <property type="entry name" value="Tryptophan synthase beta subunit-like PLP-dependent enzymes"/>
    <property type="match status" value="1"/>
</dbReference>
<dbReference type="PROSITE" id="PS00165">
    <property type="entry name" value="DEHYDRATASE_SER_THR"/>
    <property type="match status" value="1"/>
</dbReference>
<comment type="catalytic activity">
    <reaction evidence="1">
        <text>D-serine = pyruvate + NH4(+)</text>
        <dbReference type="Rhea" id="RHEA:13977"/>
        <dbReference type="ChEBI" id="CHEBI:15361"/>
        <dbReference type="ChEBI" id="CHEBI:28938"/>
        <dbReference type="ChEBI" id="CHEBI:35247"/>
        <dbReference type="EC" id="4.3.1.18"/>
    </reaction>
</comment>
<comment type="cofactor">
    <cofactor evidence="1">
        <name>pyridoxal 5'-phosphate</name>
        <dbReference type="ChEBI" id="CHEBI:597326"/>
    </cofactor>
</comment>
<comment type="subunit">
    <text evidence="1">Monomer.</text>
</comment>
<comment type="similarity">
    <text evidence="1">Belongs to the serine/threonine dehydratase family. DsdA subfamily.</text>
</comment>
<name>SDHD_SHIDS</name>
<organism>
    <name type="scientific">Shigella dysenteriae serotype 1 (strain Sd197)</name>
    <dbReference type="NCBI Taxonomy" id="300267"/>
    <lineage>
        <taxon>Bacteria</taxon>
        <taxon>Pseudomonadati</taxon>
        <taxon>Pseudomonadota</taxon>
        <taxon>Gammaproteobacteria</taxon>
        <taxon>Enterobacterales</taxon>
        <taxon>Enterobacteriaceae</taxon>
        <taxon>Shigella</taxon>
    </lineage>
</organism>
<sequence length="442" mass="47820">MENGKMNSLIAQYPLVKDLVALKETTWFNPGTTSLAEGLPYVGLTEQDVQDAHARLSRFAPYLAKAFPETAATGGIIESELVAIPAMQKRLEKEYQQPISGQLLLKKDSHLPISGSIKARGGIYEVLAHAEKLALEAGLLTLDADYSKLLSPEFKQFFSQYSIAVGSTGNLGLSIGIMSARIGFKVTVHMSADARAWKKAKLRSHGVTVVEYEQDYGVAVEEGRKAAQSDPNCFFIDDENSRTLFLGYSVAGQRLKAQFAQQGRIVDADNPLFVYLPCGVGGGPGGVAFGLKLAFGDHVHCFFAEPTHSPCMLLGVHTGLHDQISVQDIGIDNLTAADGLAVGRASGFVGRAMERLLDGFYTLSDQTMYDMLGWLAQEEGIRLEPSALAGMAGPQRVCASVSYQQMHGFNAEQLHNATHLVWATGGGMVPEEEMNQYLAKGR</sequence>
<reference key="1">
    <citation type="journal article" date="2005" name="Nucleic Acids Res.">
        <title>Genome dynamics and diversity of Shigella species, the etiologic agents of bacillary dysentery.</title>
        <authorList>
            <person name="Yang F."/>
            <person name="Yang J."/>
            <person name="Zhang X."/>
            <person name="Chen L."/>
            <person name="Jiang Y."/>
            <person name="Yan Y."/>
            <person name="Tang X."/>
            <person name="Wang J."/>
            <person name="Xiong Z."/>
            <person name="Dong J."/>
            <person name="Xue Y."/>
            <person name="Zhu Y."/>
            <person name="Xu X."/>
            <person name="Sun L."/>
            <person name="Chen S."/>
            <person name="Nie H."/>
            <person name="Peng J."/>
            <person name="Xu J."/>
            <person name="Wang Y."/>
            <person name="Yuan Z."/>
            <person name="Wen Y."/>
            <person name="Yao Z."/>
            <person name="Shen Y."/>
            <person name="Qiang B."/>
            <person name="Hou Y."/>
            <person name="Yu J."/>
            <person name="Jin Q."/>
        </authorList>
    </citation>
    <scope>NUCLEOTIDE SEQUENCE [LARGE SCALE GENOMIC DNA]</scope>
    <source>
        <strain>Sd197</strain>
    </source>
</reference>
<protein>
    <recommendedName>
        <fullName evidence="1">D-serine dehydratase</fullName>
        <ecNumber evidence="1">4.3.1.18</ecNumber>
    </recommendedName>
    <alternativeName>
        <fullName evidence="1">D-serine deaminase</fullName>
        <shortName evidence="1">DSD</shortName>
    </alternativeName>
</protein>
<evidence type="ECO:0000255" key="1">
    <source>
        <dbReference type="HAMAP-Rule" id="MF_01030"/>
    </source>
</evidence>
<keyword id="KW-0456">Lyase</keyword>
<keyword id="KW-0663">Pyridoxal phosphate</keyword>
<keyword id="KW-1185">Reference proteome</keyword>
<proteinExistence type="inferred from homology"/>
<gene>
    <name evidence="1" type="primary">dsdA</name>
    <name type="ordered locus">SDY_2561</name>
</gene>
<feature type="chain" id="PRO_0000291742" description="D-serine dehydratase">
    <location>
        <begin position="1"/>
        <end position="442"/>
    </location>
</feature>
<feature type="modified residue" description="N6-(pyridoxal phosphate)lysine" evidence="1">
    <location>
        <position position="118"/>
    </location>
</feature>